<evidence type="ECO:0000255" key="1">
    <source>
        <dbReference type="HAMAP-Rule" id="MF_01018"/>
    </source>
</evidence>
<dbReference type="EC" id="2.4.2.17" evidence="1"/>
<dbReference type="EMBL" id="AE015451">
    <property type="protein sequence ID" value="AAN66590.1"/>
    <property type="molecule type" value="Genomic_DNA"/>
</dbReference>
<dbReference type="RefSeq" id="NP_743126.1">
    <property type="nucleotide sequence ID" value="NC_002947.4"/>
</dbReference>
<dbReference type="RefSeq" id="WP_010952155.1">
    <property type="nucleotide sequence ID" value="NZ_CP169744.1"/>
</dbReference>
<dbReference type="SMR" id="Q88P87"/>
<dbReference type="STRING" id="160488.PP_0965"/>
<dbReference type="PaxDb" id="160488-PP_0965"/>
<dbReference type="GeneID" id="83678318"/>
<dbReference type="KEGG" id="ppu:PP_0965"/>
<dbReference type="PATRIC" id="fig|160488.4.peg.1027"/>
<dbReference type="eggNOG" id="COG0040">
    <property type="taxonomic scope" value="Bacteria"/>
</dbReference>
<dbReference type="HOGENOM" id="CLU_038115_2_0_6"/>
<dbReference type="OrthoDB" id="9801867at2"/>
<dbReference type="PhylomeDB" id="Q88P87"/>
<dbReference type="BioCyc" id="PPUT160488:G1G01-1039-MONOMER"/>
<dbReference type="UniPathway" id="UPA00031">
    <property type="reaction ID" value="UER00006"/>
</dbReference>
<dbReference type="Proteomes" id="UP000000556">
    <property type="component" value="Chromosome"/>
</dbReference>
<dbReference type="GO" id="GO:0005737">
    <property type="term" value="C:cytoplasm"/>
    <property type="evidence" value="ECO:0007669"/>
    <property type="project" value="UniProtKB-SubCell"/>
</dbReference>
<dbReference type="GO" id="GO:0005524">
    <property type="term" value="F:ATP binding"/>
    <property type="evidence" value="ECO:0007669"/>
    <property type="project" value="UniProtKB-KW"/>
</dbReference>
<dbReference type="GO" id="GO:0003879">
    <property type="term" value="F:ATP phosphoribosyltransferase activity"/>
    <property type="evidence" value="ECO:0007669"/>
    <property type="project" value="UniProtKB-UniRule"/>
</dbReference>
<dbReference type="GO" id="GO:0000105">
    <property type="term" value="P:L-histidine biosynthetic process"/>
    <property type="evidence" value="ECO:0007669"/>
    <property type="project" value="UniProtKB-UniRule"/>
</dbReference>
<dbReference type="CDD" id="cd13595">
    <property type="entry name" value="PBP2_HisGs"/>
    <property type="match status" value="1"/>
</dbReference>
<dbReference type="FunFam" id="3.40.190.10:FF:000011">
    <property type="entry name" value="ATP phosphoribosyltransferase"/>
    <property type="match status" value="1"/>
</dbReference>
<dbReference type="FunFam" id="3.40.190.10:FF:000022">
    <property type="entry name" value="ATP phosphoribosyltransferase"/>
    <property type="match status" value="1"/>
</dbReference>
<dbReference type="Gene3D" id="3.40.190.10">
    <property type="entry name" value="Periplasmic binding protein-like II"/>
    <property type="match status" value="2"/>
</dbReference>
<dbReference type="HAMAP" id="MF_01018">
    <property type="entry name" value="HisG_Short"/>
    <property type="match status" value="1"/>
</dbReference>
<dbReference type="InterPro" id="IPR013820">
    <property type="entry name" value="ATP_PRibTrfase_cat"/>
</dbReference>
<dbReference type="InterPro" id="IPR018198">
    <property type="entry name" value="ATP_PRibTrfase_CS"/>
</dbReference>
<dbReference type="InterPro" id="IPR001348">
    <property type="entry name" value="ATP_PRibTrfase_HisG"/>
</dbReference>
<dbReference type="InterPro" id="IPR024893">
    <property type="entry name" value="ATP_PRibTrfase_HisG_short"/>
</dbReference>
<dbReference type="NCBIfam" id="TIGR00070">
    <property type="entry name" value="hisG"/>
    <property type="match status" value="1"/>
</dbReference>
<dbReference type="PANTHER" id="PTHR21403:SF8">
    <property type="entry name" value="ATP PHOSPHORIBOSYLTRANSFERASE"/>
    <property type="match status" value="1"/>
</dbReference>
<dbReference type="PANTHER" id="PTHR21403">
    <property type="entry name" value="ATP PHOSPHORIBOSYLTRANSFERASE ATP-PRTASE"/>
    <property type="match status" value="1"/>
</dbReference>
<dbReference type="Pfam" id="PF01634">
    <property type="entry name" value="HisG"/>
    <property type="match status" value="1"/>
</dbReference>
<dbReference type="SUPFAM" id="SSF53850">
    <property type="entry name" value="Periplasmic binding protein-like II"/>
    <property type="match status" value="1"/>
</dbReference>
<dbReference type="PROSITE" id="PS01316">
    <property type="entry name" value="ATP_P_PHORIBOSYLTR"/>
    <property type="match status" value="1"/>
</dbReference>
<organism>
    <name type="scientific">Pseudomonas putida (strain ATCC 47054 / DSM 6125 / CFBP 8728 / NCIMB 11950 / KT2440)</name>
    <dbReference type="NCBI Taxonomy" id="160488"/>
    <lineage>
        <taxon>Bacteria</taxon>
        <taxon>Pseudomonadati</taxon>
        <taxon>Pseudomonadota</taxon>
        <taxon>Gammaproteobacteria</taxon>
        <taxon>Pseudomonadales</taxon>
        <taxon>Pseudomonadaceae</taxon>
        <taxon>Pseudomonas</taxon>
    </lineage>
</organism>
<accession>Q88P87</accession>
<proteinExistence type="inferred from homology"/>
<reference key="1">
    <citation type="journal article" date="2002" name="Environ. Microbiol.">
        <title>Complete genome sequence and comparative analysis of the metabolically versatile Pseudomonas putida KT2440.</title>
        <authorList>
            <person name="Nelson K.E."/>
            <person name="Weinel C."/>
            <person name="Paulsen I.T."/>
            <person name="Dodson R.J."/>
            <person name="Hilbert H."/>
            <person name="Martins dos Santos V.A.P."/>
            <person name="Fouts D.E."/>
            <person name="Gill S.R."/>
            <person name="Pop M."/>
            <person name="Holmes M."/>
            <person name="Brinkac L.M."/>
            <person name="Beanan M.J."/>
            <person name="DeBoy R.T."/>
            <person name="Daugherty S.C."/>
            <person name="Kolonay J.F."/>
            <person name="Madupu R."/>
            <person name="Nelson W.C."/>
            <person name="White O."/>
            <person name="Peterson J.D."/>
            <person name="Khouri H.M."/>
            <person name="Hance I."/>
            <person name="Chris Lee P."/>
            <person name="Holtzapple E.K."/>
            <person name="Scanlan D."/>
            <person name="Tran K."/>
            <person name="Moazzez A."/>
            <person name="Utterback T.R."/>
            <person name="Rizzo M."/>
            <person name="Lee K."/>
            <person name="Kosack D."/>
            <person name="Moestl D."/>
            <person name="Wedler H."/>
            <person name="Lauber J."/>
            <person name="Stjepandic D."/>
            <person name="Hoheisel J."/>
            <person name="Straetz M."/>
            <person name="Heim S."/>
            <person name="Kiewitz C."/>
            <person name="Eisen J.A."/>
            <person name="Timmis K.N."/>
            <person name="Duesterhoeft A."/>
            <person name="Tuemmler B."/>
            <person name="Fraser C.M."/>
        </authorList>
    </citation>
    <scope>NUCLEOTIDE SEQUENCE [LARGE SCALE GENOMIC DNA]</scope>
    <source>
        <strain>ATCC 47054 / DSM 6125 / CFBP 8728 / NCIMB 11950 / KT2440</strain>
    </source>
</reference>
<sequence>MLTIALSKGRILDDTLPLLAEAGIVPTENPDKSRKLIIPTTQDDVRLLIVRATDVPTYVEHGAADLGVAGKDVLMEYGGQGLYEPLDLQIAQCKLMTAGVVGAAEPKGRLRVATKFVNVAKRYYAEQGRQVDIIKLYGSMELAPLINLADKIIDVVDTGNTLRANGLEPQELIATISSRLVVNKASMKMQHARIQSLIDTLRAAVESRHRG</sequence>
<gene>
    <name evidence="1" type="primary">hisG</name>
    <name type="ordered locus">PP_0965</name>
</gene>
<feature type="chain" id="PRO_0000151926" description="ATP phosphoribosyltransferase">
    <location>
        <begin position="1"/>
        <end position="211"/>
    </location>
</feature>
<name>HIS1_PSEPK</name>
<keyword id="KW-0028">Amino-acid biosynthesis</keyword>
<keyword id="KW-0067">ATP-binding</keyword>
<keyword id="KW-0963">Cytoplasm</keyword>
<keyword id="KW-0328">Glycosyltransferase</keyword>
<keyword id="KW-0368">Histidine biosynthesis</keyword>
<keyword id="KW-0547">Nucleotide-binding</keyword>
<keyword id="KW-1185">Reference proteome</keyword>
<keyword id="KW-0808">Transferase</keyword>
<comment type="function">
    <text evidence="1">Catalyzes the condensation of ATP and 5-phosphoribose 1-diphosphate to form N'-(5'-phosphoribosyl)-ATP (PR-ATP). Has a crucial role in the pathway because the rate of histidine biosynthesis seems to be controlled primarily by regulation of HisG enzymatic activity.</text>
</comment>
<comment type="catalytic activity">
    <reaction evidence="1">
        <text>1-(5-phospho-beta-D-ribosyl)-ATP + diphosphate = 5-phospho-alpha-D-ribose 1-diphosphate + ATP</text>
        <dbReference type="Rhea" id="RHEA:18473"/>
        <dbReference type="ChEBI" id="CHEBI:30616"/>
        <dbReference type="ChEBI" id="CHEBI:33019"/>
        <dbReference type="ChEBI" id="CHEBI:58017"/>
        <dbReference type="ChEBI" id="CHEBI:73183"/>
        <dbReference type="EC" id="2.4.2.17"/>
    </reaction>
</comment>
<comment type="pathway">
    <text evidence="1">Amino-acid biosynthesis; L-histidine biosynthesis; L-histidine from 5-phospho-alpha-D-ribose 1-diphosphate: step 1/9.</text>
</comment>
<comment type="subunit">
    <text evidence="1">Heteromultimer composed of HisG and HisZ subunits.</text>
</comment>
<comment type="subcellular location">
    <subcellularLocation>
        <location evidence="1">Cytoplasm</location>
    </subcellularLocation>
</comment>
<comment type="domain">
    <text>Lacks the C-terminal regulatory region which is replaced by HisZ.</text>
</comment>
<comment type="similarity">
    <text evidence="1">Belongs to the ATP phosphoribosyltransferase family. Short subfamily.</text>
</comment>
<protein>
    <recommendedName>
        <fullName evidence="1">ATP phosphoribosyltransferase</fullName>
        <shortName evidence="1">ATP-PRT</shortName>
        <shortName evidence="1">ATP-PRTase</shortName>
        <ecNumber evidence="1">2.4.2.17</ecNumber>
    </recommendedName>
</protein>